<keyword id="KW-0539">Nucleus</keyword>
<keyword id="KW-1185">Reference proteome</keyword>
<keyword id="KW-0677">Repeat</keyword>
<keyword id="KW-0853">WD repeat</keyword>
<proteinExistence type="inferred from homology"/>
<reference key="1">
    <citation type="submission" date="2005-09" db="EMBL/GenBank/DDBJ databases">
        <title>Annotation of the Aspergillus terreus NIH2624 genome.</title>
        <authorList>
            <person name="Birren B.W."/>
            <person name="Lander E.S."/>
            <person name="Galagan J.E."/>
            <person name="Nusbaum C."/>
            <person name="Devon K."/>
            <person name="Henn M."/>
            <person name="Ma L.-J."/>
            <person name="Jaffe D.B."/>
            <person name="Butler J."/>
            <person name="Alvarez P."/>
            <person name="Gnerre S."/>
            <person name="Grabherr M."/>
            <person name="Kleber M."/>
            <person name="Mauceli E.W."/>
            <person name="Brockman W."/>
            <person name="Rounsley S."/>
            <person name="Young S.K."/>
            <person name="LaButti K."/>
            <person name="Pushparaj V."/>
            <person name="DeCaprio D."/>
            <person name="Crawford M."/>
            <person name="Koehrsen M."/>
            <person name="Engels R."/>
            <person name="Montgomery P."/>
            <person name="Pearson M."/>
            <person name="Howarth C."/>
            <person name="Larson L."/>
            <person name="Luoma S."/>
            <person name="White J."/>
            <person name="Alvarado L."/>
            <person name="Kodira C.D."/>
            <person name="Zeng Q."/>
            <person name="Oleary S."/>
            <person name="Yandava C."/>
            <person name="Denning D.W."/>
            <person name="Nierman W.C."/>
            <person name="Milne T."/>
            <person name="Madden K."/>
        </authorList>
    </citation>
    <scope>NUCLEOTIDE SEQUENCE [LARGE SCALE GENOMIC DNA]</scope>
    <source>
        <strain>NIH 2624 / FGSC A1156</strain>
    </source>
</reference>
<sequence>MFDTVCTLPLSADLFSQALHPKEPVVSVGLSSGHVQTFRLPSDEVDSDDDGASTSSSRTGRGHIDTMWRTRRHKGSCRCLGFGVDGEMLYSAGTDGLVKAAKAETGVVENKIAIPLDKNGSVDAPTIIHALSPQTLLLATDSSALHLYDLRIPYSKVSARPEQSHHPHDDYISSLTPLPPSDTSTSGFSKQWVTTGGTTLAVTDLRRGVLVRSEDQEEELVSSVYIDGLPSSGTSRGAKVVVGGSGGVLTLWEKGAWDDQDERVYVQRESGGGESLETLAVVPDDLGKGKMVAVGLGNGAVKFVRIGANRVVSEVMHDETEGVVGLGFDVEGRMVSGGGQIVKVWHEAVDSGDGVNGNETGGKRAFGDDSDEDSDDGDDDDDSGDSDQENKRGDARKKRKKGKTPKRGGGQAVMAFHDLD</sequence>
<protein>
    <recommendedName>
        <fullName>WD repeat-containing protein jip5</fullName>
    </recommendedName>
</protein>
<gene>
    <name type="primary">jip5</name>
    <name type="ORF">ATEG_03726</name>
</gene>
<organism>
    <name type="scientific">Aspergillus terreus (strain NIH 2624 / FGSC A1156)</name>
    <dbReference type="NCBI Taxonomy" id="341663"/>
    <lineage>
        <taxon>Eukaryota</taxon>
        <taxon>Fungi</taxon>
        <taxon>Dikarya</taxon>
        <taxon>Ascomycota</taxon>
        <taxon>Pezizomycotina</taxon>
        <taxon>Eurotiomycetes</taxon>
        <taxon>Eurotiomycetidae</taxon>
        <taxon>Eurotiales</taxon>
        <taxon>Aspergillaceae</taxon>
        <taxon>Aspergillus</taxon>
        <taxon>Aspergillus subgen. Circumdati</taxon>
    </lineage>
</organism>
<evidence type="ECO:0000250" key="1"/>
<evidence type="ECO:0000256" key="2">
    <source>
        <dbReference type="SAM" id="MobiDB-lite"/>
    </source>
</evidence>
<evidence type="ECO:0000305" key="3"/>
<feature type="chain" id="PRO_0000333550" description="WD repeat-containing protein jip5">
    <location>
        <begin position="1"/>
        <end position="420"/>
    </location>
</feature>
<feature type="repeat" description="WD 1">
    <location>
        <begin position="9"/>
        <end position="48"/>
    </location>
</feature>
<feature type="repeat" description="WD 2">
    <location>
        <begin position="72"/>
        <end position="111"/>
    </location>
</feature>
<feature type="repeat" description="WD 3">
    <location>
        <begin position="117"/>
        <end position="158"/>
    </location>
</feature>
<feature type="repeat" description="WD 4">
    <location>
        <begin position="221"/>
        <end position="262"/>
    </location>
</feature>
<feature type="repeat" description="WD 5">
    <location>
        <begin position="271"/>
        <end position="314"/>
    </location>
</feature>
<feature type="repeat" description="WD 6">
    <location>
        <begin position="318"/>
        <end position="355"/>
    </location>
</feature>
<feature type="region of interest" description="Disordered" evidence="2">
    <location>
        <begin position="39"/>
        <end position="63"/>
    </location>
</feature>
<feature type="region of interest" description="Disordered" evidence="2">
    <location>
        <begin position="350"/>
        <end position="420"/>
    </location>
</feature>
<feature type="compositionally biased region" description="Acidic residues" evidence="2">
    <location>
        <begin position="368"/>
        <end position="387"/>
    </location>
</feature>
<feature type="compositionally biased region" description="Basic residues" evidence="2">
    <location>
        <begin position="394"/>
        <end position="406"/>
    </location>
</feature>
<comment type="subcellular location">
    <subcellularLocation>
        <location evidence="1">Nucleus</location>
        <location evidence="1">Nucleolus</location>
    </subcellularLocation>
</comment>
<comment type="similarity">
    <text evidence="3">Belongs to the WD repeat WDR55 family.</text>
</comment>
<accession>Q0CRF8</accession>
<dbReference type="EMBL" id="CH476598">
    <property type="protein sequence ID" value="EAU35528.1"/>
    <property type="molecule type" value="Genomic_DNA"/>
</dbReference>
<dbReference type="RefSeq" id="XP_001212904.1">
    <property type="nucleotide sequence ID" value="XM_001212904.1"/>
</dbReference>
<dbReference type="SMR" id="Q0CRF8"/>
<dbReference type="STRING" id="341663.Q0CRF8"/>
<dbReference type="EnsemblFungi" id="EAU35528">
    <property type="protein sequence ID" value="EAU35528"/>
    <property type="gene ID" value="ATEG_03726"/>
</dbReference>
<dbReference type="GeneID" id="4318705"/>
<dbReference type="VEuPathDB" id="FungiDB:ATEG_03726"/>
<dbReference type="eggNOG" id="KOG2444">
    <property type="taxonomic scope" value="Eukaryota"/>
</dbReference>
<dbReference type="HOGENOM" id="CLU_052691_0_0_1"/>
<dbReference type="OMA" id="QAIHPTE"/>
<dbReference type="OrthoDB" id="2288928at2759"/>
<dbReference type="Proteomes" id="UP000007963">
    <property type="component" value="Unassembled WGS sequence"/>
</dbReference>
<dbReference type="GO" id="GO:0005730">
    <property type="term" value="C:nucleolus"/>
    <property type="evidence" value="ECO:0007669"/>
    <property type="project" value="UniProtKB-SubCell"/>
</dbReference>
<dbReference type="Gene3D" id="2.130.10.10">
    <property type="entry name" value="YVTN repeat-like/Quinoprotein amine dehydrogenase"/>
    <property type="match status" value="1"/>
</dbReference>
<dbReference type="InterPro" id="IPR015943">
    <property type="entry name" value="WD40/YVTN_repeat-like_dom_sf"/>
</dbReference>
<dbReference type="InterPro" id="IPR036322">
    <property type="entry name" value="WD40_repeat_dom_sf"/>
</dbReference>
<dbReference type="InterPro" id="IPR050505">
    <property type="entry name" value="WDR55_POC1"/>
</dbReference>
<dbReference type="PANTHER" id="PTHR44019">
    <property type="entry name" value="WD REPEAT-CONTAINING PROTEIN 55"/>
    <property type="match status" value="1"/>
</dbReference>
<dbReference type="PANTHER" id="PTHR44019:SF20">
    <property type="entry name" value="WD REPEAT-CONTAINING PROTEIN 55"/>
    <property type="match status" value="1"/>
</dbReference>
<dbReference type="SUPFAM" id="SSF50978">
    <property type="entry name" value="WD40 repeat-like"/>
    <property type="match status" value="1"/>
</dbReference>
<name>JIP5_ASPTN</name>